<organism>
    <name type="scientific">Vesicular stomatitis Indiana virus (strain 98COE North America)</name>
    <name type="common">VSIV</name>
    <dbReference type="NCBI Taxonomy" id="434488"/>
    <lineage>
        <taxon>Viruses</taxon>
        <taxon>Riboviria</taxon>
        <taxon>Orthornavirae</taxon>
        <taxon>Negarnaviricota</taxon>
        <taxon>Haploviricotina</taxon>
        <taxon>Monjiviricetes</taxon>
        <taxon>Mononegavirales</taxon>
        <taxon>Rhabdoviridae</taxon>
        <taxon>Alpharhabdovirinae</taxon>
        <taxon>Vesiculovirus</taxon>
        <taxon>Vesiculovirus indiana</taxon>
    </lineage>
</organism>
<proteinExistence type="inferred from homology"/>
<feature type="chain" id="PRO_0000287354" description="Phosphoprotein">
    <location>
        <begin position="1"/>
        <end position="265"/>
    </location>
</feature>
<feature type="region of interest" description="Interaction with N(0)" evidence="2">
    <location>
        <begin position="1"/>
        <end position="60"/>
    </location>
</feature>
<feature type="region of interest" description="Disordered" evidence="5">
    <location>
        <begin position="42"/>
        <end position="72"/>
    </location>
</feature>
<feature type="region of interest" description="Interaction with the L polymerase" evidence="2">
    <location>
        <begin position="49"/>
        <end position="105"/>
    </location>
</feature>
<feature type="region of interest" description="Oligomerization" evidence="2">
    <location>
        <begin position="109"/>
        <end position="170"/>
    </location>
</feature>
<feature type="region of interest" description="Hinge" evidence="2">
    <location>
        <begin position="171"/>
        <end position="193"/>
    </location>
</feature>
<feature type="region of interest" description="Interaction with the Nucleoprotein-RNA and template-binding" evidence="3">
    <location>
        <begin position="245"/>
        <end position="265"/>
    </location>
</feature>
<feature type="compositionally biased region" description="Acidic residues" evidence="5">
    <location>
        <begin position="58"/>
        <end position="70"/>
    </location>
</feature>
<feature type="site" description="Involved in oligomerization" evidence="4">
    <location>
        <position position="138"/>
    </location>
</feature>
<feature type="site" description="Involved in oligomerization" evidence="4">
    <location>
        <position position="141"/>
    </location>
</feature>
<feature type="modified residue" description="Phosphotyrosine; by host" evidence="2">
    <location>
        <position position="14"/>
    </location>
</feature>
<feature type="modified residue" description="Phosphoserine; by host CK2" evidence="1">
    <location>
        <position position="60"/>
    </location>
</feature>
<feature type="modified residue" description="Phosphothreonine; by host CK2" evidence="1">
    <location>
        <position position="62"/>
    </location>
</feature>
<feature type="modified residue" description="Phosphoserine; by host CK2" evidence="1">
    <location>
        <position position="64"/>
    </location>
</feature>
<feature type="modified residue" description="Phosphoserine; by host" evidence="4">
    <location>
        <position position="226"/>
    </location>
</feature>
<feature type="modified residue" description="Phosphoserine; by host" evidence="4">
    <location>
        <position position="227"/>
    </location>
</feature>
<feature type="modified residue" description="Phosphoserine" evidence="4">
    <location>
        <position position="233"/>
    </location>
</feature>
<comment type="function">
    <text evidence="2">Nonenzymatic cofactor regulating the function and conformation of the RNA polymerase and part of the transcription and replication complex. Binds the viral ribonucleocapsid and positions the L polymerase on the template. Acts as a chaperone for newly synthesized free N protein, so-called N(0). Plays a role in virion assembly.</text>
</comment>
<comment type="subunit">
    <text evidence="2 4">Homodimer (By similarity). Interacts with the L polymerase; the association of P and L forms the polymerase complex and positions P optimally for encapsidation of newly synthesized genomes with the nucleoprotein. Interacts (via N-terminus) with N(0). Interacts (via C-terminus) with N in ribonucleocapsid (via C-terminus); this interaction allows to package the L polymerase in the virion and positions the polymerase on the template, since P acts as a bridge between N and L (By similarity).</text>
</comment>
<comment type="subcellular location">
    <subcellularLocation>
        <location evidence="2">Virion</location>
    </subcellularLocation>
    <subcellularLocation>
        <location evidence="2">Host cytoplasm</location>
    </subcellularLocation>
</comment>
<comment type="domain">
    <text evidence="2">The N-terminus is disordered and is involved in binding N(0). The region of interaction with the L polymerase is necessary for transcription. The hinge region is highly variable. The central domain is involved in oligomerization. The C-terminus is basic and essential for binding the N-RNA template.</text>
</comment>
<comment type="PTM">
    <text evidence="2 3">Phosphorylated in the N-terminus by host CK2 (By similarity). Phosphorylation of the phosphoprotein is required for the transcriptional function of the P-L complex (By similarity).</text>
</comment>
<comment type="similarity">
    <text evidence="6">Belongs to the vesiculovirus protein P family.</text>
</comment>
<organismHost>
    <name type="scientific">Aedes</name>
    <dbReference type="NCBI Taxonomy" id="7158"/>
</organismHost>
<organismHost>
    <name type="scientific">Bos taurus</name>
    <name type="common">Bovine</name>
    <dbReference type="NCBI Taxonomy" id="9913"/>
</organismHost>
<organismHost>
    <name type="scientific">Culicoides</name>
    <dbReference type="NCBI Taxonomy" id="58271"/>
</organismHost>
<organismHost>
    <name type="scientific">Equus asinus</name>
    <name type="common">Donkey</name>
    <name type="synonym">Equus africanus asinus</name>
    <dbReference type="NCBI Taxonomy" id="9793"/>
</organismHost>
<organismHost>
    <name type="scientific">Equus caballus</name>
    <name type="common">Horse</name>
    <dbReference type="NCBI Taxonomy" id="9796"/>
</organismHost>
<organismHost>
    <name type="scientific">Homo sapiens</name>
    <name type="common">Human</name>
    <dbReference type="NCBI Taxonomy" id="9606"/>
</organismHost>
<organismHost>
    <name type="scientific">Lutzomyia</name>
    <dbReference type="NCBI Taxonomy" id="252607"/>
</organismHost>
<organismHost>
    <name type="scientific">Musca domestica</name>
    <name type="common">House fly</name>
    <dbReference type="NCBI Taxonomy" id="7370"/>
</organismHost>
<organismHost>
    <name type="scientific">Simuliidae</name>
    <name type="common">black flies</name>
    <dbReference type="NCBI Taxonomy" id="7190"/>
</organismHost>
<organismHost>
    <name type="scientific">Sus scrofa</name>
    <name type="common">Pig</name>
    <dbReference type="NCBI Taxonomy" id="9823"/>
</organismHost>
<reference key="1">
    <citation type="journal article" date="2002" name="J. Gen. Virol.">
        <title>Full-length genome analysis of natural isolates of vesicular stomatitis virus (Indiana 1 serotype) from North, Central and South America.</title>
        <authorList>
            <person name="Rodriguez L.L."/>
            <person name="Pauszek S.J."/>
            <person name="Bunch T.A."/>
            <person name="Schumann K.R."/>
        </authorList>
    </citation>
    <scope>NUCLEOTIDE SEQUENCE [GENOMIC RNA]</scope>
</reference>
<sequence length="265" mass="30125">MDNLTKVREYLKSYSRLDQAVGEIDEIEAQRDEKSNYELFQEDGVEEHTKPSYFQAADDSDTESEPEIEDNQGLYVPDPEAEQVEGFIQGPLDDYADEEVDVVFTSDWKQPELKSDEHGKTLRLTLPEGLSGEQKSQWLSTIKAVVQSAKYWNLAECTFEASREGVIMEERQMTPDVYKVTPVMNTHPSQSEAVSDVWSLSKTSMTFQPKKASLQPLTISLDELFSSRGEFISVGGNGRMSHKEAILLGLRYKKLYNQARVKYSL</sequence>
<name>PHOSP_VSIVN</name>
<dbReference type="EMBL" id="AF473864">
    <property type="protein sequence ID" value="AAN16981.1"/>
    <property type="molecule type" value="Genomic_RNA"/>
</dbReference>
<dbReference type="SMR" id="Q8B0I3"/>
<dbReference type="Proteomes" id="UP000007624">
    <property type="component" value="Segment"/>
</dbReference>
<dbReference type="GO" id="GO:0030430">
    <property type="term" value="C:host cell cytoplasm"/>
    <property type="evidence" value="ECO:0007669"/>
    <property type="project" value="UniProtKB-SubCell"/>
</dbReference>
<dbReference type="GO" id="GO:0044423">
    <property type="term" value="C:virion component"/>
    <property type="evidence" value="ECO:0007669"/>
    <property type="project" value="UniProtKB-KW"/>
</dbReference>
<dbReference type="GO" id="GO:0003968">
    <property type="term" value="F:RNA-directed RNA polymerase activity"/>
    <property type="evidence" value="ECO:0007669"/>
    <property type="project" value="InterPro"/>
</dbReference>
<dbReference type="CDD" id="cd21033">
    <property type="entry name" value="VSV_P-protein-C_like"/>
    <property type="match status" value="1"/>
</dbReference>
<dbReference type="FunFam" id="1.10.8.440:FF:000001">
    <property type="entry name" value="Phosphoprotein"/>
    <property type="match status" value="1"/>
</dbReference>
<dbReference type="Gene3D" id="6.10.140.830">
    <property type="match status" value="1"/>
</dbReference>
<dbReference type="Gene3D" id="1.10.8.440">
    <property type="entry name" value="Vesicular stomatitis virus phosphoprotein C-terminal domain"/>
    <property type="match status" value="1"/>
</dbReference>
<dbReference type="InterPro" id="IPR048220">
    <property type="entry name" value="P-protein-C_vesiculovirus"/>
</dbReference>
<dbReference type="InterPro" id="IPR043036">
    <property type="entry name" value="Phosphoprotein_C_viral"/>
</dbReference>
<dbReference type="InterPro" id="IPR037263">
    <property type="entry name" value="Phosphoprotein_central"/>
</dbReference>
<dbReference type="Pfam" id="PF00922">
    <property type="entry name" value="Phosphoprotein"/>
    <property type="match status" value="1"/>
</dbReference>
<dbReference type="SUPFAM" id="SSF160892">
    <property type="entry name" value="Phosphoprotein oligomerization domain-like"/>
    <property type="match status" value="1"/>
</dbReference>
<protein>
    <recommendedName>
        <fullName>Phosphoprotein</fullName>
        <shortName>Protein P</shortName>
    </recommendedName>
    <alternativeName>
        <fullName>NS</fullName>
    </alternativeName>
    <alternativeName>
        <fullName>Protein M1</fullName>
    </alternativeName>
</protein>
<accession>Q8B0I3</accession>
<evidence type="ECO:0000250" key="1"/>
<evidence type="ECO:0000250" key="2">
    <source>
        <dbReference type="UniProtKB" id="P03520"/>
    </source>
</evidence>
<evidence type="ECO:0000250" key="3">
    <source>
        <dbReference type="UniProtKB" id="P04877"/>
    </source>
</evidence>
<evidence type="ECO:0000250" key="4">
    <source>
        <dbReference type="UniProtKB" id="P04880"/>
    </source>
</evidence>
<evidence type="ECO:0000256" key="5">
    <source>
        <dbReference type="SAM" id="MobiDB-lite"/>
    </source>
</evidence>
<evidence type="ECO:0000305" key="6"/>
<keyword id="KW-0143">Chaperone</keyword>
<keyword id="KW-1035">Host cytoplasm</keyword>
<keyword id="KW-0597">Phosphoprotein</keyword>
<keyword id="KW-0693">Viral RNA replication</keyword>
<keyword id="KW-0946">Virion</keyword>
<gene>
    <name type="primary">P</name>
</gene>